<gene>
    <name type="primary">ihfB</name>
    <name type="synonym">himD</name>
    <name type="synonym">hip</name>
</gene>
<dbReference type="EMBL" id="M62643">
    <property type="protein sequence ID" value="AAA26557.1"/>
    <property type="molecule type" value="Genomic_DNA"/>
</dbReference>
<dbReference type="PIR" id="B38173">
    <property type="entry name" value="B38173"/>
</dbReference>
<dbReference type="RefSeq" id="WP_004928264.1">
    <property type="nucleotide sequence ID" value="NZ_WVHX01000013.1"/>
</dbReference>
<dbReference type="SMR" id="P23303"/>
<dbReference type="STRING" id="273526.SMDB11_0993"/>
<dbReference type="GeneID" id="98187576"/>
<dbReference type="OrthoDB" id="9804203at2"/>
<dbReference type="GO" id="GO:0005694">
    <property type="term" value="C:chromosome"/>
    <property type="evidence" value="ECO:0007669"/>
    <property type="project" value="InterPro"/>
</dbReference>
<dbReference type="GO" id="GO:0005829">
    <property type="term" value="C:cytosol"/>
    <property type="evidence" value="ECO:0007669"/>
    <property type="project" value="TreeGrafter"/>
</dbReference>
<dbReference type="GO" id="GO:0003677">
    <property type="term" value="F:DNA binding"/>
    <property type="evidence" value="ECO:0007669"/>
    <property type="project" value="UniProtKB-UniRule"/>
</dbReference>
<dbReference type="GO" id="GO:0030527">
    <property type="term" value="F:structural constituent of chromatin"/>
    <property type="evidence" value="ECO:0007669"/>
    <property type="project" value="InterPro"/>
</dbReference>
<dbReference type="GO" id="GO:0006310">
    <property type="term" value="P:DNA recombination"/>
    <property type="evidence" value="ECO:0007669"/>
    <property type="project" value="UniProtKB-UniRule"/>
</dbReference>
<dbReference type="GO" id="GO:0006355">
    <property type="term" value="P:regulation of DNA-templated transcription"/>
    <property type="evidence" value="ECO:0007669"/>
    <property type="project" value="UniProtKB-UniRule"/>
</dbReference>
<dbReference type="GO" id="GO:0006417">
    <property type="term" value="P:regulation of translation"/>
    <property type="evidence" value="ECO:0007669"/>
    <property type="project" value="UniProtKB-UniRule"/>
</dbReference>
<dbReference type="CDD" id="cd13836">
    <property type="entry name" value="IHF_B"/>
    <property type="match status" value="1"/>
</dbReference>
<dbReference type="FunFam" id="4.10.520.10:FF:000003">
    <property type="entry name" value="Integration host factor subunit beta"/>
    <property type="match status" value="1"/>
</dbReference>
<dbReference type="Gene3D" id="4.10.520.10">
    <property type="entry name" value="IHF-like DNA-binding proteins"/>
    <property type="match status" value="1"/>
</dbReference>
<dbReference type="HAMAP" id="MF_00381">
    <property type="entry name" value="IHF_beta"/>
    <property type="match status" value="1"/>
</dbReference>
<dbReference type="InterPro" id="IPR000119">
    <property type="entry name" value="Hist_DNA-bd"/>
</dbReference>
<dbReference type="InterPro" id="IPR020816">
    <property type="entry name" value="Histone-like_DNA-bd_CS"/>
</dbReference>
<dbReference type="InterPro" id="IPR010992">
    <property type="entry name" value="IHF-like_DNA-bd_dom_sf"/>
</dbReference>
<dbReference type="InterPro" id="IPR005685">
    <property type="entry name" value="IHF_beta"/>
</dbReference>
<dbReference type="NCBIfam" id="TIGR00988">
    <property type="entry name" value="hip"/>
    <property type="match status" value="1"/>
</dbReference>
<dbReference type="NCBIfam" id="NF001222">
    <property type="entry name" value="PRK00199.1"/>
    <property type="match status" value="1"/>
</dbReference>
<dbReference type="PANTHER" id="PTHR33175">
    <property type="entry name" value="DNA-BINDING PROTEIN HU"/>
    <property type="match status" value="1"/>
</dbReference>
<dbReference type="PANTHER" id="PTHR33175:SF5">
    <property type="entry name" value="INTEGRATION HOST FACTOR SUBUNIT BETA"/>
    <property type="match status" value="1"/>
</dbReference>
<dbReference type="Pfam" id="PF00216">
    <property type="entry name" value="Bac_DNA_binding"/>
    <property type="match status" value="1"/>
</dbReference>
<dbReference type="PRINTS" id="PR01727">
    <property type="entry name" value="DNABINDINGHU"/>
</dbReference>
<dbReference type="SMART" id="SM00411">
    <property type="entry name" value="BHL"/>
    <property type="match status" value="1"/>
</dbReference>
<dbReference type="SUPFAM" id="SSF47729">
    <property type="entry name" value="IHF-like DNA-binding proteins"/>
    <property type="match status" value="1"/>
</dbReference>
<dbReference type="PROSITE" id="PS00045">
    <property type="entry name" value="HISTONE_LIKE"/>
    <property type="match status" value="1"/>
</dbReference>
<organism>
    <name type="scientific">Serratia marcescens</name>
    <dbReference type="NCBI Taxonomy" id="615"/>
    <lineage>
        <taxon>Bacteria</taxon>
        <taxon>Pseudomonadati</taxon>
        <taxon>Pseudomonadota</taxon>
        <taxon>Gammaproteobacteria</taxon>
        <taxon>Enterobacterales</taxon>
        <taxon>Yersiniaceae</taxon>
        <taxon>Serratia</taxon>
    </lineage>
</organism>
<accession>P23303</accession>
<keyword id="KW-0233">DNA recombination</keyword>
<keyword id="KW-0238">DNA-binding</keyword>
<keyword id="KW-0804">Transcription</keyword>
<keyword id="KW-0805">Transcription regulation</keyword>
<keyword id="KW-0810">Translation regulation</keyword>
<name>IHFB_SERMA</name>
<protein>
    <recommendedName>
        <fullName>Integration host factor subunit beta</fullName>
        <shortName>IHF-beta</shortName>
    </recommendedName>
</protein>
<comment type="function">
    <text>This protein is one of the two subunits of integration host factor, a specific DNA-binding protein that functions in genetic recombination as well as in transcriptional and translational control.</text>
</comment>
<comment type="subunit">
    <text evidence="1">Heterodimer of an alpha and a beta chain.</text>
</comment>
<comment type="similarity">
    <text evidence="2">Belongs to the bacterial histone-like protein family.</text>
</comment>
<feature type="chain" id="PRO_0000105071" description="Integration host factor subunit beta">
    <location>
        <begin position="1"/>
        <end position="94"/>
    </location>
</feature>
<evidence type="ECO:0000250" key="1"/>
<evidence type="ECO:0000305" key="2"/>
<proteinExistence type="inferred from homology"/>
<reference key="1">
    <citation type="journal article" date="1991" name="J. Bacteriol.">
        <title>Genes coding for integration host factor are conserved in Gram-negative bacteria.</title>
        <authorList>
            <person name="Haluzi H."/>
            <person name="Goitein D."/>
            <person name="Koby S."/>
            <person name="Mendelson I."/>
            <person name="Teff D."/>
            <person name="Mengeritsky G."/>
            <person name="Giladi H."/>
            <person name="Oppenheim A.B."/>
        </authorList>
    </citation>
    <scope>NUCLEOTIDE SEQUENCE [GENOMIC DNA]</scope>
</reference>
<sequence length="94" mass="10546">MTKSELIERLAGQQSHIPAKAVEDAVKEMLEHMAATLAEGERIEIRGFGSFSLHYRAPRVGRNPKTGDKVELDGKYVPHFKPGKELRDRANIYG</sequence>